<name>ARGC_GEOSE</name>
<proteinExistence type="evidence at transcript level"/>
<reference key="1">
    <citation type="journal article" date="1996" name="Mol. Gen. Genet.">
        <title>The arginine operon of Bacillus stearothermophilus: characterization of the control region and its interaction with the heterologous B. subtilis arginine repressor.</title>
        <authorList>
            <person name="Savchenko A."/>
            <person name="Charlier D.R.M."/>
            <person name="Dion M."/>
            <person name="Weigel P."/>
            <person name="Hallet J.-N."/>
            <person name="Holtham C."/>
            <person name="Baumberg S."/>
            <person name="Glansdorff N."/>
            <person name="Sakanyan V."/>
        </authorList>
    </citation>
    <scope>NUCLEOTIDE SEQUENCE [GENOMIC DNA] OF 1-84</scope>
    <scope>TRANSCRIPTIONAL REGULATION</scope>
    <source>
        <strain>NCIMB 8224 / CCM 2186 / NCA C-1235.1 / VKM B-718</strain>
    </source>
</reference>
<reference key="2">
    <citation type="journal article" date="1993" name="J. Gen. Microbiol.">
        <title>Primary structure, partial purification and regulation of key enzymes of the acetyl cycle of arginine biosynthesis in Bacillus stearothermophilus: dual function of ornithine acetyltransferase.</title>
        <authorList>
            <person name="Sakanyan V."/>
            <person name="Charlier D.R.M."/>
            <person name="Legrain C."/>
            <person name="Kochikyan A."/>
            <person name="Mett I."/>
            <person name="Pierard P."/>
            <person name="Glansdorff N."/>
        </authorList>
    </citation>
    <scope>NUCLEOTIDE SEQUENCE [GENOMIC DNA] OF 52-345</scope>
    <source>
        <strain>NCIMB 8224 / CCM 2186 / NCA C-1235.1 / VKM B-718</strain>
    </source>
</reference>
<protein>
    <recommendedName>
        <fullName evidence="1">N-acetyl-gamma-glutamyl-phosphate reductase</fullName>
        <shortName evidence="1">AGPR</shortName>
        <ecNumber evidence="1">1.2.1.38</ecNumber>
    </recommendedName>
    <alternativeName>
        <fullName evidence="1">N-acetyl-glutamate semialdehyde dehydrogenase</fullName>
        <shortName evidence="1">NAGSA dehydrogenase</shortName>
    </alternativeName>
</protein>
<evidence type="ECO:0000255" key="1">
    <source>
        <dbReference type="HAMAP-Rule" id="MF_00150"/>
    </source>
</evidence>
<evidence type="ECO:0000269" key="2">
    <source>
    </source>
</evidence>
<gene>
    <name evidence="1" type="primary">argC</name>
</gene>
<dbReference type="EC" id="1.2.1.38" evidence="1"/>
<dbReference type="EMBL" id="L06036">
    <property type="protein sequence ID" value="AAA22196.1"/>
    <property type="molecule type" value="Genomic_DNA"/>
</dbReference>
<dbReference type="PIR" id="S72490">
    <property type="entry name" value="S72490"/>
</dbReference>
<dbReference type="SMR" id="Q07906"/>
<dbReference type="UniPathway" id="UPA00068">
    <property type="reaction ID" value="UER00108"/>
</dbReference>
<dbReference type="GO" id="GO:0005737">
    <property type="term" value="C:cytoplasm"/>
    <property type="evidence" value="ECO:0007669"/>
    <property type="project" value="UniProtKB-SubCell"/>
</dbReference>
<dbReference type="GO" id="GO:0003942">
    <property type="term" value="F:N-acetyl-gamma-glutamyl-phosphate reductase activity"/>
    <property type="evidence" value="ECO:0007669"/>
    <property type="project" value="UniProtKB-UniRule"/>
</dbReference>
<dbReference type="GO" id="GO:0051287">
    <property type="term" value="F:NAD binding"/>
    <property type="evidence" value="ECO:0007669"/>
    <property type="project" value="InterPro"/>
</dbReference>
<dbReference type="GO" id="GO:0070401">
    <property type="term" value="F:NADP+ binding"/>
    <property type="evidence" value="ECO:0007669"/>
    <property type="project" value="InterPro"/>
</dbReference>
<dbReference type="GO" id="GO:0006526">
    <property type="term" value="P:L-arginine biosynthetic process"/>
    <property type="evidence" value="ECO:0007669"/>
    <property type="project" value="UniProtKB-UniRule"/>
</dbReference>
<dbReference type="CDD" id="cd23934">
    <property type="entry name" value="AGPR_1_C"/>
    <property type="match status" value="1"/>
</dbReference>
<dbReference type="CDD" id="cd17895">
    <property type="entry name" value="AGPR_1_N"/>
    <property type="match status" value="1"/>
</dbReference>
<dbReference type="FunFam" id="3.30.360.10:FF:000014">
    <property type="entry name" value="N-acetyl-gamma-glutamyl-phosphate reductase"/>
    <property type="match status" value="1"/>
</dbReference>
<dbReference type="Gene3D" id="3.30.360.10">
    <property type="entry name" value="Dihydrodipicolinate Reductase, domain 2"/>
    <property type="match status" value="1"/>
</dbReference>
<dbReference type="Gene3D" id="3.40.50.720">
    <property type="entry name" value="NAD(P)-binding Rossmann-like Domain"/>
    <property type="match status" value="1"/>
</dbReference>
<dbReference type="HAMAP" id="MF_00150">
    <property type="entry name" value="ArgC_type1"/>
    <property type="match status" value="1"/>
</dbReference>
<dbReference type="InterPro" id="IPR023013">
    <property type="entry name" value="AGPR_AS"/>
</dbReference>
<dbReference type="InterPro" id="IPR000706">
    <property type="entry name" value="AGPR_type-1"/>
</dbReference>
<dbReference type="InterPro" id="IPR036291">
    <property type="entry name" value="NAD(P)-bd_dom_sf"/>
</dbReference>
<dbReference type="InterPro" id="IPR050085">
    <property type="entry name" value="NAGSA_dehydrogenase"/>
</dbReference>
<dbReference type="InterPro" id="IPR000534">
    <property type="entry name" value="Semialdehyde_DH_NAD-bd"/>
</dbReference>
<dbReference type="NCBIfam" id="TIGR01850">
    <property type="entry name" value="argC"/>
    <property type="match status" value="1"/>
</dbReference>
<dbReference type="PANTHER" id="PTHR32338:SF10">
    <property type="entry name" value="N-ACETYL-GAMMA-GLUTAMYL-PHOSPHATE REDUCTASE, CHLOROPLASTIC-RELATED"/>
    <property type="match status" value="1"/>
</dbReference>
<dbReference type="PANTHER" id="PTHR32338">
    <property type="entry name" value="N-ACETYL-GAMMA-GLUTAMYL-PHOSPHATE REDUCTASE, CHLOROPLASTIC-RELATED-RELATED"/>
    <property type="match status" value="1"/>
</dbReference>
<dbReference type="Pfam" id="PF01118">
    <property type="entry name" value="Semialdhyde_dh"/>
    <property type="match status" value="1"/>
</dbReference>
<dbReference type="Pfam" id="PF22698">
    <property type="entry name" value="Semialdhyde_dhC_1"/>
    <property type="match status" value="1"/>
</dbReference>
<dbReference type="SMART" id="SM00859">
    <property type="entry name" value="Semialdhyde_dh"/>
    <property type="match status" value="1"/>
</dbReference>
<dbReference type="SUPFAM" id="SSF55347">
    <property type="entry name" value="Glyceraldehyde-3-phosphate dehydrogenase-like, C-terminal domain"/>
    <property type="match status" value="1"/>
</dbReference>
<dbReference type="SUPFAM" id="SSF51735">
    <property type="entry name" value="NAD(P)-binding Rossmann-fold domains"/>
    <property type="match status" value="1"/>
</dbReference>
<dbReference type="PROSITE" id="PS01224">
    <property type="entry name" value="ARGC"/>
    <property type="match status" value="1"/>
</dbReference>
<accession>Q07906</accession>
<feature type="chain" id="PRO_0000112384" description="N-acetyl-gamma-glutamyl-phosphate reductase">
    <location>
        <begin position="1"/>
        <end position="345"/>
    </location>
</feature>
<feature type="active site" evidence="1">
    <location>
        <position position="149"/>
    </location>
</feature>
<comment type="function">
    <text evidence="1">Catalyzes the NADPH-dependent reduction of N-acetyl-5-glutamyl phosphate to yield N-acetyl-L-glutamate 5-semialdehyde.</text>
</comment>
<comment type="catalytic activity">
    <reaction evidence="1">
        <text>N-acetyl-L-glutamate 5-semialdehyde + phosphate + NADP(+) = N-acetyl-L-glutamyl 5-phosphate + NADPH + H(+)</text>
        <dbReference type="Rhea" id="RHEA:21588"/>
        <dbReference type="ChEBI" id="CHEBI:15378"/>
        <dbReference type="ChEBI" id="CHEBI:29123"/>
        <dbReference type="ChEBI" id="CHEBI:43474"/>
        <dbReference type="ChEBI" id="CHEBI:57783"/>
        <dbReference type="ChEBI" id="CHEBI:57936"/>
        <dbReference type="ChEBI" id="CHEBI:58349"/>
        <dbReference type="EC" id="1.2.1.38"/>
    </reaction>
</comment>
<comment type="pathway">
    <text evidence="1">Amino-acid biosynthesis; L-arginine biosynthesis; N(2)-acetyl-L-ornithine from L-glutamate: step 3/4.</text>
</comment>
<comment type="subcellular location">
    <subcellularLocation>
        <location evidence="1">Cytoplasm</location>
    </subcellularLocation>
</comment>
<comment type="induction">
    <text evidence="2">Expression of the argCJBD operon is regulated by ArgR. This binding is arginine dependent.</text>
</comment>
<comment type="similarity">
    <text evidence="1">Belongs to the NAGSA dehydrogenase family. Type 1 subfamily.</text>
</comment>
<organism>
    <name type="scientific">Geobacillus stearothermophilus</name>
    <name type="common">Bacillus stearothermophilus</name>
    <dbReference type="NCBI Taxonomy" id="1422"/>
    <lineage>
        <taxon>Bacteria</taxon>
        <taxon>Bacillati</taxon>
        <taxon>Bacillota</taxon>
        <taxon>Bacilli</taxon>
        <taxon>Bacillales</taxon>
        <taxon>Anoxybacillaceae</taxon>
        <taxon>Geobacillus</taxon>
    </lineage>
</organism>
<sequence length="345" mass="37455">MMNVAIIGATGYSGAELFRLLYGHPHVSQCDVFSSSQDGIHLSESFPHVGAVDGAVLHKLEIEALAKYDAVFFATPPGVSGEWAPALVDRGVKVIDLSGDFRLKDGAVYAQWYGREAAPSAYLERAVYGLTEWNREAVRGAVLLSNPGCYPTATLLGLAPLVKEGLIKEDSIIVDAKSGVSGAGRKAGLGTHFSEVNENVKIYKVNAHQHIPEIEQALQTWNEAVAPITFSTHLIPMTRGIMATIYAKAKQSISPNDLVDLYKTSYEGSPFVRIRQLGQFPATKDVYGSNYCDIGLAYDERTERVTVVSVIDNLMKGAAGQAVQNFNLMMGWDEAEGLRSLPIYP</sequence>
<keyword id="KW-0028">Amino-acid biosynthesis</keyword>
<keyword id="KW-0055">Arginine biosynthesis</keyword>
<keyword id="KW-0963">Cytoplasm</keyword>
<keyword id="KW-0521">NADP</keyword>
<keyword id="KW-0560">Oxidoreductase</keyword>